<comment type="catalytic activity">
    <reaction>
        <text>L-seryl-[protein] + ATP = O-phospho-L-seryl-[protein] + ADP + H(+)</text>
        <dbReference type="Rhea" id="RHEA:17989"/>
        <dbReference type="Rhea" id="RHEA-COMP:9863"/>
        <dbReference type="Rhea" id="RHEA-COMP:11604"/>
        <dbReference type="ChEBI" id="CHEBI:15378"/>
        <dbReference type="ChEBI" id="CHEBI:29999"/>
        <dbReference type="ChEBI" id="CHEBI:30616"/>
        <dbReference type="ChEBI" id="CHEBI:83421"/>
        <dbReference type="ChEBI" id="CHEBI:456216"/>
        <dbReference type="EC" id="2.7.11.1"/>
    </reaction>
</comment>
<comment type="catalytic activity">
    <reaction>
        <text>L-threonyl-[protein] + ATP = O-phospho-L-threonyl-[protein] + ADP + H(+)</text>
        <dbReference type="Rhea" id="RHEA:46608"/>
        <dbReference type="Rhea" id="RHEA-COMP:11060"/>
        <dbReference type="Rhea" id="RHEA-COMP:11605"/>
        <dbReference type="ChEBI" id="CHEBI:15378"/>
        <dbReference type="ChEBI" id="CHEBI:30013"/>
        <dbReference type="ChEBI" id="CHEBI:30616"/>
        <dbReference type="ChEBI" id="CHEBI:61977"/>
        <dbReference type="ChEBI" id="CHEBI:456216"/>
        <dbReference type="EC" id="2.7.11.1"/>
    </reaction>
</comment>
<comment type="subcellular location">
    <subcellularLocation>
        <location evidence="1">Cell membrane</location>
        <topology evidence="1">Single-pass membrane protein</topology>
    </subcellularLocation>
</comment>
<comment type="PTM">
    <text evidence="1">Autophosphorylated on serine and threonine residues. Dephosphorylated by PstP (By similarity).</text>
</comment>
<comment type="similarity">
    <text evidence="3">Belongs to the protein kinase superfamily. Ser/Thr protein kinase family.</text>
</comment>
<name>PKNE_MYCBO</name>
<feature type="chain" id="PRO_0000171210" description="Serine/threonine-protein kinase PknE">
    <location>
        <begin position="1"/>
        <end position="566"/>
    </location>
</feature>
<feature type="topological domain" description="Cytoplasmic" evidence="2">
    <location>
        <begin position="1"/>
        <end position="337"/>
    </location>
</feature>
<feature type="transmembrane region" description="Helical" evidence="2">
    <location>
        <begin position="338"/>
        <end position="358"/>
    </location>
</feature>
<feature type="topological domain" description="Extracellular" evidence="2">
    <location>
        <begin position="359"/>
        <end position="566"/>
    </location>
</feature>
<feature type="domain" description="Protein kinase" evidence="3">
    <location>
        <begin position="16"/>
        <end position="275"/>
    </location>
</feature>
<feature type="region of interest" description="Disordered" evidence="4">
    <location>
        <begin position="296"/>
        <end position="330"/>
    </location>
</feature>
<feature type="active site" description="Proton acceptor" evidence="3">
    <location>
        <position position="139"/>
    </location>
</feature>
<feature type="binding site" evidence="3">
    <location>
        <begin position="22"/>
        <end position="30"/>
    </location>
    <ligand>
        <name>ATP</name>
        <dbReference type="ChEBI" id="CHEBI:30616"/>
    </ligand>
</feature>
<feature type="binding site" evidence="3">
    <location>
        <position position="45"/>
    </location>
    <ligand>
        <name>ATP</name>
        <dbReference type="ChEBI" id="CHEBI:30616"/>
    </ligand>
</feature>
<feature type="modified residue" description="Phosphoserine; by autocatalysis" evidence="1">
    <location>
        <position position="7"/>
    </location>
</feature>
<feature type="modified residue" description="Phosphothreonine; by autocatalysis" evidence="1">
    <location>
        <position position="11"/>
    </location>
</feature>
<feature type="modified residue" description="Phosphothreonine; by autocatalysis" evidence="1">
    <location>
        <position position="50"/>
    </location>
</feature>
<feature type="modified residue" description="Phosphothreonine; by autocatalysis" evidence="1">
    <location>
        <position position="59"/>
    </location>
</feature>
<feature type="modified residue" description="Phosphothreonine; by autocatalysis" evidence="1">
    <location>
        <position position="170"/>
    </location>
</feature>
<feature type="modified residue" description="Phosphothreonine; by autocatalysis" evidence="1">
    <location>
        <position position="175"/>
    </location>
</feature>
<feature type="modified residue" description="Phosphothreonine; by autocatalysis" evidence="1">
    <location>
        <position position="178"/>
    </location>
</feature>
<gene>
    <name type="primary">pknE</name>
    <name type="ordered locus">BQ2027_MB1772</name>
</gene>
<reference key="1">
    <citation type="journal article" date="2003" name="Proc. Natl. Acad. Sci. U.S.A.">
        <title>The complete genome sequence of Mycobacterium bovis.</title>
        <authorList>
            <person name="Garnier T."/>
            <person name="Eiglmeier K."/>
            <person name="Camus J.-C."/>
            <person name="Medina N."/>
            <person name="Mansoor H."/>
            <person name="Pryor M."/>
            <person name="Duthoy S."/>
            <person name="Grondin S."/>
            <person name="Lacroix C."/>
            <person name="Monsempe C."/>
            <person name="Simon S."/>
            <person name="Harris B."/>
            <person name="Atkin R."/>
            <person name="Doggett J."/>
            <person name="Mayes R."/>
            <person name="Keating L."/>
            <person name="Wheeler P.R."/>
            <person name="Parkhill J."/>
            <person name="Barrell B.G."/>
            <person name="Cole S.T."/>
            <person name="Gordon S.V."/>
            <person name="Hewinson R.G."/>
        </authorList>
    </citation>
    <scope>NUCLEOTIDE SEQUENCE [LARGE SCALE GENOMIC DNA]</scope>
    <source>
        <strain>ATCC BAA-935 / AF2122/97</strain>
    </source>
</reference>
<reference key="2">
    <citation type="journal article" date="2017" name="Genome Announc.">
        <title>Updated reference genome sequence and annotation of Mycobacterium bovis AF2122/97.</title>
        <authorList>
            <person name="Malone K.M."/>
            <person name="Farrell D."/>
            <person name="Stuber T.P."/>
            <person name="Schubert O.T."/>
            <person name="Aebersold R."/>
            <person name="Robbe-Austerman S."/>
            <person name="Gordon S.V."/>
        </authorList>
    </citation>
    <scope>NUCLEOTIDE SEQUENCE [LARGE SCALE GENOMIC DNA]</scope>
    <scope>GENOME REANNOTATION</scope>
    <source>
        <strain>ATCC BAA-935 / AF2122/97</strain>
    </source>
</reference>
<keyword id="KW-0067">ATP-binding</keyword>
<keyword id="KW-1003">Cell membrane</keyword>
<keyword id="KW-0418">Kinase</keyword>
<keyword id="KW-0472">Membrane</keyword>
<keyword id="KW-0547">Nucleotide-binding</keyword>
<keyword id="KW-0597">Phosphoprotein</keyword>
<keyword id="KW-1185">Reference proteome</keyword>
<keyword id="KW-0723">Serine/threonine-protein kinase</keyword>
<keyword id="KW-0808">Transferase</keyword>
<keyword id="KW-0812">Transmembrane</keyword>
<keyword id="KW-1133">Transmembrane helix</keyword>
<accession>Q7TZN3</accession>
<accession>A0A1R3XZ82</accession>
<accession>X2BJ35</accession>
<proteinExistence type="inferred from homology"/>
<evidence type="ECO:0000250" key="1"/>
<evidence type="ECO:0000255" key="2"/>
<evidence type="ECO:0000255" key="3">
    <source>
        <dbReference type="PROSITE-ProRule" id="PRU00159"/>
    </source>
</evidence>
<evidence type="ECO:0000256" key="4">
    <source>
        <dbReference type="SAM" id="MobiDB-lite"/>
    </source>
</evidence>
<sequence length="566" mass="60528">MDGTAESREGTQFGPYRLRRLVGRGGMGDVYEAEDTVRERIVALKLMSETLSSDPDFRTRMQREARTAGRLQEPHVVPIHDFGEIDGQLYVDMRLINGVDLAAMLRRQGPLAPPRAVAIVRQIGSALDAAHAAGATHRDVKPENILVSADDFAYLVDFGIASATTDEKLTQLGNTVGTLYYMAPERFSESHATYRADIYALTCVLYECLTGSPPYQGDQLSVMGAHINQAIPRPSTVRPGIPVAFDAVIARGMAKNPEDRYVTCGDLSAAAHAALATADQDRATDILRRSQVAKLPVPSTHPVSPGTRWPQPTPWAGGAPPWGPPSSPLPRSARQPWLWVGVAVAVVVALAGGLGIALAHPWRSSGPRTSAPPPPPPADAVELRVLNDGVFVGSSVAPTTIDIFNEPICPPCGSFIRSYASDIDTAVADKQLAVRYHLLNFLDDQSHSKNYSTRAVAASYCVAGQNDPKLYASFYSALFGSDFQPQENAASDRTDAELAHLAQTVGAEPTAISCIKSGADLGTAQTKATNASETLAGFNASGTPFVWDGSMVVNYQDPSWLARLIG</sequence>
<organism>
    <name type="scientific">Mycobacterium bovis (strain ATCC BAA-935 / AF2122/97)</name>
    <dbReference type="NCBI Taxonomy" id="233413"/>
    <lineage>
        <taxon>Bacteria</taxon>
        <taxon>Bacillati</taxon>
        <taxon>Actinomycetota</taxon>
        <taxon>Actinomycetes</taxon>
        <taxon>Mycobacteriales</taxon>
        <taxon>Mycobacteriaceae</taxon>
        <taxon>Mycobacterium</taxon>
        <taxon>Mycobacterium tuberculosis complex</taxon>
    </lineage>
</organism>
<protein>
    <recommendedName>
        <fullName>Serine/threonine-protein kinase PknE</fullName>
        <ecNumber>2.7.11.1</ecNumber>
    </recommendedName>
</protein>
<dbReference type="EC" id="2.7.11.1"/>
<dbReference type="EMBL" id="LT708304">
    <property type="protein sequence ID" value="SIU00375.1"/>
    <property type="molecule type" value="Genomic_DNA"/>
</dbReference>
<dbReference type="RefSeq" id="NP_855424.1">
    <property type="nucleotide sequence ID" value="NC_002945.3"/>
</dbReference>
<dbReference type="RefSeq" id="WP_010950585.1">
    <property type="nucleotide sequence ID" value="NC_002945.4"/>
</dbReference>
<dbReference type="SMR" id="Q7TZN3"/>
<dbReference type="KEGG" id="mbo:BQ2027_MB1772"/>
<dbReference type="PATRIC" id="fig|233413.5.peg.1935"/>
<dbReference type="Proteomes" id="UP000001419">
    <property type="component" value="Chromosome"/>
</dbReference>
<dbReference type="GO" id="GO:0005886">
    <property type="term" value="C:plasma membrane"/>
    <property type="evidence" value="ECO:0007669"/>
    <property type="project" value="UniProtKB-SubCell"/>
</dbReference>
<dbReference type="GO" id="GO:0005524">
    <property type="term" value="F:ATP binding"/>
    <property type="evidence" value="ECO:0007669"/>
    <property type="project" value="UniProtKB-KW"/>
</dbReference>
<dbReference type="GO" id="GO:0106310">
    <property type="term" value="F:protein serine kinase activity"/>
    <property type="evidence" value="ECO:0007669"/>
    <property type="project" value="RHEA"/>
</dbReference>
<dbReference type="GO" id="GO:0004674">
    <property type="term" value="F:protein serine/threonine kinase activity"/>
    <property type="evidence" value="ECO:0007669"/>
    <property type="project" value="UniProtKB-KW"/>
</dbReference>
<dbReference type="CDD" id="cd14014">
    <property type="entry name" value="STKc_PknB_like"/>
    <property type="match status" value="1"/>
</dbReference>
<dbReference type="FunFam" id="1.10.510.10:FF:000021">
    <property type="entry name" value="Serine/threonine protein kinase"/>
    <property type="match status" value="1"/>
</dbReference>
<dbReference type="FunFam" id="3.30.200.20:FF:000348">
    <property type="entry name" value="Serine/threonine protein kinase"/>
    <property type="match status" value="1"/>
</dbReference>
<dbReference type="FunFam" id="3.40.30.10:FF:000373">
    <property type="entry name" value="Transmembrane serine/threonine-protein kinase E"/>
    <property type="match status" value="1"/>
</dbReference>
<dbReference type="Gene3D" id="3.40.30.10">
    <property type="entry name" value="Glutaredoxin"/>
    <property type="match status" value="1"/>
</dbReference>
<dbReference type="Gene3D" id="3.30.200.20">
    <property type="entry name" value="Phosphorylase Kinase, domain 1"/>
    <property type="match status" value="1"/>
</dbReference>
<dbReference type="Gene3D" id="1.10.510.10">
    <property type="entry name" value="Transferase(Phosphotransferase) domain 1"/>
    <property type="match status" value="1"/>
</dbReference>
<dbReference type="InterPro" id="IPR011009">
    <property type="entry name" value="Kinase-like_dom_sf"/>
</dbReference>
<dbReference type="InterPro" id="IPR000719">
    <property type="entry name" value="Prot_kinase_dom"/>
</dbReference>
<dbReference type="InterPro" id="IPR017441">
    <property type="entry name" value="Protein_kinase_ATP_BS"/>
</dbReference>
<dbReference type="InterPro" id="IPR012336">
    <property type="entry name" value="Thioredoxin-like_fold"/>
</dbReference>
<dbReference type="InterPro" id="IPR036249">
    <property type="entry name" value="Thioredoxin-like_sf"/>
</dbReference>
<dbReference type="PANTHER" id="PTHR43289">
    <property type="entry name" value="MITOGEN-ACTIVATED PROTEIN KINASE KINASE KINASE 20-RELATED"/>
    <property type="match status" value="1"/>
</dbReference>
<dbReference type="PANTHER" id="PTHR43289:SF6">
    <property type="entry name" value="SERINE_THREONINE-PROTEIN KINASE NEKL-3"/>
    <property type="match status" value="1"/>
</dbReference>
<dbReference type="Pfam" id="PF00069">
    <property type="entry name" value="Pkinase"/>
    <property type="match status" value="1"/>
</dbReference>
<dbReference type="Pfam" id="PF13462">
    <property type="entry name" value="Thioredoxin_4"/>
    <property type="match status" value="1"/>
</dbReference>
<dbReference type="SMART" id="SM00220">
    <property type="entry name" value="S_TKc"/>
    <property type="match status" value="1"/>
</dbReference>
<dbReference type="SUPFAM" id="SSF56112">
    <property type="entry name" value="Protein kinase-like (PK-like)"/>
    <property type="match status" value="1"/>
</dbReference>
<dbReference type="SUPFAM" id="SSF52833">
    <property type="entry name" value="Thioredoxin-like"/>
    <property type="match status" value="1"/>
</dbReference>
<dbReference type="PROSITE" id="PS00107">
    <property type="entry name" value="PROTEIN_KINASE_ATP"/>
    <property type="match status" value="1"/>
</dbReference>
<dbReference type="PROSITE" id="PS50011">
    <property type="entry name" value="PROTEIN_KINASE_DOM"/>
    <property type="match status" value="1"/>
</dbReference>